<gene>
    <name evidence="5 12" type="primary">nvd</name>
    <name evidence="12" type="ORF">CG40050</name>
</gene>
<organism>
    <name type="scientific">Drosophila melanogaster</name>
    <name type="common">Fruit fly</name>
    <dbReference type="NCBI Taxonomy" id="7227"/>
    <lineage>
        <taxon>Eukaryota</taxon>
        <taxon>Metazoa</taxon>
        <taxon>Ecdysozoa</taxon>
        <taxon>Arthropoda</taxon>
        <taxon>Hexapoda</taxon>
        <taxon>Insecta</taxon>
        <taxon>Pterygota</taxon>
        <taxon>Neoptera</taxon>
        <taxon>Endopterygota</taxon>
        <taxon>Diptera</taxon>
        <taxon>Brachycera</taxon>
        <taxon>Muscomorpha</taxon>
        <taxon>Ephydroidea</taxon>
        <taxon>Drosophilidae</taxon>
        <taxon>Drosophila</taxon>
        <taxon>Sophophora</taxon>
    </lineage>
</organism>
<reference key="1">
    <citation type="journal article" date="2006" name="Development">
        <title>Neverland is an evolutionally conserved Rieske-domain protein that is essential for ecdysone synthesis and insect growth.</title>
        <authorList>
            <person name="Yoshiyama T."/>
            <person name="Namiki T."/>
            <person name="Mita K."/>
            <person name="Kataoka H."/>
            <person name="Niwa R."/>
        </authorList>
    </citation>
    <scope>NUCLEOTIDE SEQUENCE [MRNA]</scope>
    <scope>FUNCTION</scope>
    <scope>TISSUE SPECIFICITY</scope>
    <scope>PATHWAY</scope>
    <scope>DISRUPTION PHENOTYPE</scope>
    <source>
        <strain evidence="11">Oregon-R</strain>
    </source>
</reference>
<reference key="2">
    <citation type="journal article" date="2000" name="Science">
        <title>The genome sequence of Drosophila melanogaster.</title>
        <authorList>
            <person name="Adams M.D."/>
            <person name="Celniker S.E."/>
            <person name="Holt R.A."/>
            <person name="Evans C.A."/>
            <person name="Gocayne J.D."/>
            <person name="Amanatides P.G."/>
            <person name="Scherer S.E."/>
            <person name="Li P.W."/>
            <person name="Hoskins R.A."/>
            <person name="Galle R.F."/>
            <person name="George R.A."/>
            <person name="Lewis S.E."/>
            <person name="Richards S."/>
            <person name="Ashburner M."/>
            <person name="Henderson S.N."/>
            <person name="Sutton G.G."/>
            <person name="Wortman J.R."/>
            <person name="Yandell M.D."/>
            <person name="Zhang Q."/>
            <person name="Chen L.X."/>
            <person name="Brandon R.C."/>
            <person name="Rogers Y.-H.C."/>
            <person name="Blazej R.G."/>
            <person name="Champe M."/>
            <person name="Pfeiffer B.D."/>
            <person name="Wan K.H."/>
            <person name="Doyle C."/>
            <person name="Baxter E.G."/>
            <person name="Helt G."/>
            <person name="Nelson C.R."/>
            <person name="Miklos G.L.G."/>
            <person name="Abril J.F."/>
            <person name="Agbayani A."/>
            <person name="An H.-J."/>
            <person name="Andrews-Pfannkoch C."/>
            <person name="Baldwin D."/>
            <person name="Ballew R.M."/>
            <person name="Basu A."/>
            <person name="Baxendale J."/>
            <person name="Bayraktaroglu L."/>
            <person name="Beasley E.M."/>
            <person name="Beeson K.Y."/>
            <person name="Benos P.V."/>
            <person name="Berman B.P."/>
            <person name="Bhandari D."/>
            <person name="Bolshakov S."/>
            <person name="Borkova D."/>
            <person name="Botchan M.R."/>
            <person name="Bouck J."/>
            <person name="Brokstein P."/>
            <person name="Brottier P."/>
            <person name="Burtis K.C."/>
            <person name="Busam D.A."/>
            <person name="Butler H."/>
            <person name="Cadieu E."/>
            <person name="Center A."/>
            <person name="Chandra I."/>
            <person name="Cherry J.M."/>
            <person name="Cawley S."/>
            <person name="Dahlke C."/>
            <person name="Davenport L.B."/>
            <person name="Davies P."/>
            <person name="de Pablos B."/>
            <person name="Delcher A."/>
            <person name="Deng Z."/>
            <person name="Mays A.D."/>
            <person name="Dew I."/>
            <person name="Dietz S.M."/>
            <person name="Dodson K."/>
            <person name="Doup L.E."/>
            <person name="Downes M."/>
            <person name="Dugan-Rocha S."/>
            <person name="Dunkov B.C."/>
            <person name="Dunn P."/>
            <person name="Durbin K.J."/>
            <person name="Evangelista C.C."/>
            <person name="Ferraz C."/>
            <person name="Ferriera S."/>
            <person name="Fleischmann W."/>
            <person name="Fosler C."/>
            <person name="Gabrielian A.E."/>
            <person name="Garg N.S."/>
            <person name="Gelbart W.M."/>
            <person name="Glasser K."/>
            <person name="Glodek A."/>
            <person name="Gong F."/>
            <person name="Gorrell J.H."/>
            <person name="Gu Z."/>
            <person name="Guan P."/>
            <person name="Harris M."/>
            <person name="Harris N.L."/>
            <person name="Harvey D.A."/>
            <person name="Heiman T.J."/>
            <person name="Hernandez J.R."/>
            <person name="Houck J."/>
            <person name="Hostin D."/>
            <person name="Houston K.A."/>
            <person name="Howland T.J."/>
            <person name="Wei M.-H."/>
            <person name="Ibegwam C."/>
            <person name="Jalali M."/>
            <person name="Kalush F."/>
            <person name="Karpen G.H."/>
            <person name="Ke Z."/>
            <person name="Kennison J.A."/>
            <person name="Ketchum K.A."/>
            <person name="Kimmel B.E."/>
            <person name="Kodira C.D."/>
            <person name="Kraft C.L."/>
            <person name="Kravitz S."/>
            <person name="Kulp D."/>
            <person name="Lai Z."/>
            <person name="Lasko P."/>
            <person name="Lei Y."/>
            <person name="Levitsky A.A."/>
            <person name="Li J.H."/>
            <person name="Li Z."/>
            <person name="Liang Y."/>
            <person name="Lin X."/>
            <person name="Liu X."/>
            <person name="Mattei B."/>
            <person name="McIntosh T.C."/>
            <person name="McLeod M.P."/>
            <person name="McPherson D."/>
            <person name="Merkulov G."/>
            <person name="Milshina N.V."/>
            <person name="Mobarry C."/>
            <person name="Morris J."/>
            <person name="Moshrefi A."/>
            <person name="Mount S.M."/>
            <person name="Moy M."/>
            <person name="Murphy B."/>
            <person name="Murphy L."/>
            <person name="Muzny D.M."/>
            <person name="Nelson D.L."/>
            <person name="Nelson D.R."/>
            <person name="Nelson K.A."/>
            <person name="Nixon K."/>
            <person name="Nusskern D.R."/>
            <person name="Pacleb J.M."/>
            <person name="Palazzolo M."/>
            <person name="Pittman G.S."/>
            <person name="Pan S."/>
            <person name="Pollard J."/>
            <person name="Puri V."/>
            <person name="Reese M.G."/>
            <person name="Reinert K."/>
            <person name="Remington K."/>
            <person name="Saunders R.D.C."/>
            <person name="Scheeler F."/>
            <person name="Shen H."/>
            <person name="Shue B.C."/>
            <person name="Siden-Kiamos I."/>
            <person name="Simpson M."/>
            <person name="Skupski M.P."/>
            <person name="Smith T.J."/>
            <person name="Spier E."/>
            <person name="Spradling A.C."/>
            <person name="Stapleton M."/>
            <person name="Strong R."/>
            <person name="Sun E."/>
            <person name="Svirskas R."/>
            <person name="Tector C."/>
            <person name="Turner R."/>
            <person name="Venter E."/>
            <person name="Wang A.H."/>
            <person name="Wang X."/>
            <person name="Wang Z.-Y."/>
            <person name="Wassarman D.A."/>
            <person name="Weinstock G.M."/>
            <person name="Weissenbach J."/>
            <person name="Williams S.M."/>
            <person name="Woodage T."/>
            <person name="Worley K.C."/>
            <person name="Wu D."/>
            <person name="Yang S."/>
            <person name="Yao Q.A."/>
            <person name="Ye J."/>
            <person name="Yeh R.-F."/>
            <person name="Zaveri J.S."/>
            <person name="Zhan M."/>
            <person name="Zhang G."/>
            <person name="Zhao Q."/>
            <person name="Zheng L."/>
            <person name="Zheng X.H."/>
            <person name="Zhong F.N."/>
            <person name="Zhong W."/>
            <person name="Zhou X."/>
            <person name="Zhu S.C."/>
            <person name="Zhu X."/>
            <person name="Smith H.O."/>
            <person name="Gibbs R.A."/>
            <person name="Myers E.W."/>
            <person name="Rubin G.M."/>
            <person name="Venter J.C."/>
        </authorList>
    </citation>
    <scope>NUCLEOTIDE SEQUENCE [LARGE SCALE GENOMIC DNA]</scope>
    <source>
        <strain>Berkeley</strain>
    </source>
</reference>
<reference key="3">
    <citation type="journal article" date="2002" name="Genome Biol.">
        <title>Annotation of the Drosophila melanogaster euchromatic genome: a systematic review.</title>
        <authorList>
            <person name="Misra S."/>
            <person name="Crosby M.A."/>
            <person name="Mungall C.J."/>
            <person name="Matthews B.B."/>
            <person name="Campbell K.S."/>
            <person name="Hradecky P."/>
            <person name="Huang Y."/>
            <person name="Kaminker J.S."/>
            <person name="Millburn G.H."/>
            <person name="Prochnik S.E."/>
            <person name="Smith C.D."/>
            <person name="Tupy J.L."/>
            <person name="Whitfield E.J."/>
            <person name="Bayraktaroglu L."/>
            <person name="Berman B.P."/>
            <person name="Bettencourt B.R."/>
            <person name="Celniker S.E."/>
            <person name="de Grey A.D.N.J."/>
            <person name="Drysdale R.A."/>
            <person name="Harris N.L."/>
            <person name="Richter J."/>
            <person name="Russo S."/>
            <person name="Schroeder A.J."/>
            <person name="Shu S.Q."/>
            <person name="Stapleton M."/>
            <person name="Yamada C."/>
            <person name="Ashburner M."/>
            <person name="Gelbart W.M."/>
            <person name="Rubin G.M."/>
            <person name="Lewis S.E."/>
        </authorList>
    </citation>
    <scope>GENOME REANNOTATION</scope>
    <source>
        <strain>Berkeley</strain>
    </source>
</reference>
<reference key="4">
    <citation type="submission" date="2005-03" db="EMBL/GenBank/DDBJ databases">
        <authorList>
            <person name="Stapleton M."/>
            <person name="Carlson J."/>
            <person name="Chavez C."/>
            <person name="Frise E."/>
            <person name="George R."/>
            <person name="Pacleb J."/>
            <person name="Park S."/>
            <person name="Wan K."/>
            <person name="Yu C."/>
            <person name="Rubin G.M."/>
            <person name="Celniker S."/>
        </authorList>
    </citation>
    <scope>NUCLEOTIDE SEQUENCE [LARGE SCALE MRNA]</scope>
    <source>
        <strain evidence="10">Berkeley</strain>
    </source>
</reference>
<reference key="5">
    <citation type="journal article" date="2011" name="J. Biol. Chem.">
        <title>The conserved Rieske oxygenase DAF-36/Neverland is a novel cholesterol-metabolizing enzyme.</title>
        <authorList>
            <person name="Yoshiyama-Yanagawa T."/>
            <person name="Enya S."/>
            <person name="Shimada-Niwa Y."/>
            <person name="Yaguchi S."/>
            <person name="Haramoto Y."/>
            <person name="Matsuya T."/>
            <person name="Shiomi K."/>
            <person name="Sasakura Y."/>
            <person name="Takahashi S."/>
            <person name="Asashima M."/>
            <person name="Kataoka H."/>
            <person name="Niwa R."/>
        </authorList>
    </citation>
    <scope>FUNCTION</scope>
    <scope>CATALYTIC ACTIVITY</scope>
    <scope>PATHWAY</scope>
</reference>
<name>NVD_DROME</name>
<keyword id="KW-0001">2Fe-2S</keyword>
<keyword id="KW-0153">Cholesterol metabolism</keyword>
<keyword id="KW-0408">Iron</keyword>
<keyword id="KW-0411">Iron-sulfur</keyword>
<keyword id="KW-0443">Lipid metabolism</keyword>
<keyword id="KW-0472">Membrane</keyword>
<keyword id="KW-0479">Metal-binding</keyword>
<keyword id="KW-0560">Oxidoreductase</keyword>
<keyword id="KW-1185">Reference proteome</keyword>
<keyword id="KW-0753">Steroid metabolism</keyword>
<keyword id="KW-1207">Sterol metabolism</keyword>
<keyword id="KW-0812">Transmembrane</keyword>
<keyword id="KW-1133">Transmembrane helix</keyword>
<evidence type="ECO:0000255" key="1"/>
<evidence type="ECO:0000255" key="2">
    <source>
        <dbReference type="PROSITE-ProRule" id="PRU00628"/>
    </source>
</evidence>
<evidence type="ECO:0000269" key="3">
    <source>
    </source>
</evidence>
<evidence type="ECO:0000269" key="4">
    <source>
    </source>
</evidence>
<evidence type="ECO:0000303" key="5">
    <source>
    </source>
</evidence>
<evidence type="ECO:0000303" key="6">
    <source>
    </source>
</evidence>
<evidence type="ECO:0000305" key="7"/>
<evidence type="ECO:0000305" key="8">
    <source>
    </source>
</evidence>
<evidence type="ECO:0000305" key="9">
    <source>
    </source>
</evidence>
<evidence type="ECO:0000312" key="10">
    <source>
        <dbReference type="EMBL" id="AAX33409.1"/>
    </source>
</evidence>
<evidence type="ECO:0000312" key="11">
    <source>
        <dbReference type="EMBL" id="BAE94193.1"/>
    </source>
</evidence>
<evidence type="ECO:0000312" key="12">
    <source>
        <dbReference type="FlyBase" id="FBgn0287185"/>
    </source>
</evidence>
<feature type="chain" id="PRO_0000452609" description="Cholesterol 7-desaturase nvd">
    <location>
        <begin position="1"/>
        <end position="429"/>
    </location>
</feature>
<feature type="transmembrane region" description="Helical" evidence="1">
    <location>
        <begin position="23"/>
        <end position="43"/>
    </location>
</feature>
<feature type="domain" description="Rieske" evidence="2">
    <location>
        <begin position="98"/>
        <end position="201"/>
    </location>
</feature>
<feature type="binding site" evidence="2">
    <location>
        <position position="138"/>
    </location>
    <ligand>
        <name>[2Fe-2S] cluster</name>
        <dbReference type="ChEBI" id="CHEBI:190135"/>
    </ligand>
</feature>
<feature type="binding site" evidence="2">
    <location>
        <position position="140"/>
    </location>
    <ligand>
        <name>[2Fe-2S] cluster</name>
        <dbReference type="ChEBI" id="CHEBI:190135"/>
    </ligand>
</feature>
<feature type="binding site" evidence="2">
    <location>
        <position position="158"/>
    </location>
    <ligand>
        <name>[2Fe-2S] cluster</name>
        <dbReference type="ChEBI" id="CHEBI:190135"/>
    </ligand>
</feature>
<feature type="binding site" evidence="2">
    <location>
        <position position="161"/>
    </location>
    <ligand>
        <name>[2Fe-2S] cluster</name>
        <dbReference type="ChEBI" id="CHEBI:190135"/>
    </ligand>
</feature>
<feature type="sequence conflict" description="In Ref. 4; AAX33409." evidence="7" ref="4">
    <original>K</original>
    <variation>R</variation>
    <location>
        <position position="17"/>
    </location>
</feature>
<feature type="sequence conflict" description="In Ref. 4; AAX33409." evidence="7" ref="4">
    <original>P</original>
    <variation>T</variation>
    <location>
        <position position="159"/>
    </location>
</feature>
<sequence length="429" mass="50106">MTSYSLFWMSLLKNNWKPISNDFVICLWTLAVTFIRIYWIFFVPLEWKKDLDNEKWSFLRKTENVVCYNHKRDTINRLRKLKIQKIIELPPPYPNGWYGILKSSQLKAGEATCVSCLGEDLVIFRSKKDIVFILDAYCPHLGANLGIGGSVADDCVICPFHQWKFRGTDGLCINIPYSTSVPKGSKLKKWISQEVDGFIFIWYHAEQTELPWDLPVPMGEIDDTFVYHGHNEFYINCHIQEIPENGADIAHFNAIHKKNFINGSWAQKKRLFGLGSHHWKARWSPFTGKLKYLAEVNLSHTFKLFGKFGCFRMEVSGKQIGPSIVCLEVNSYTFGKIKVFQYITPIEPMLQKVVHEFYGPRWIAPLMKIFIYGESLMFERDIKIWNHKVFNRNPILAKEDASIKKFRLWFSQFYSSNSKIYSEATNIGW</sequence>
<protein>
    <recommendedName>
        <fullName>Cholesterol 7-desaturase nvd</fullName>
        <ecNumber evidence="4">1.14.19.21</ecNumber>
    </recommendedName>
    <alternativeName>
        <fullName evidence="5 6">Neverland</fullName>
        <shortName evidence="5 6">Nvd_Dm</shortName>
    </alternativeName>
    <alternativeName>
        <fullName evidence="11">Rieske-domain protein Neverland</fullName>
    </alternativeName>
</protein>
<proteinExistence type="evidence at protein level"/>
<accession>Q1JUZ1</accession>
<accession>Q5BIG3</accession>
<comment type="function">
    <text evidence="3 4">Catalyzes the production of 7-dehydrocholesterol (7-DHC or cholesta-5,7-dien-3beta-ol) by inserting a double bond (desaturating) at the C7-C8 single bond of cholesterol (PubMed:21632547). Essential regulator of steroid biosynthesis, as this reaction is the first step in the synthesis of the steroid hormone Delta(7)-dafachronic acid (PubMed:16763204, PubMed:21632547). Required for insect molting, metamorphosis and body growth throughout development via the regulation of ecdysteroid biosynthesis in the prothoracic gland (PubMed:16763204).</text>
</comment>
<comment type="catalytic activity">
    <reaction evidence="4">
        <text>cholesterol + NADPH + O2 + H(+) = 7-dehydrocholesterol + NADP(+) + 2 H2O</text>
        <dbReference type="Rhea" id="RHEA:45024"/>
        <dbReference type="ChEBI" id="CHEBI:15377"/>
        <dbReference type="ChEBI" id="CHEBI:15378"/>
        <dbReference type="ChEBI" id="CHEBI:15379"/>
        <dbReference type="ChEBI" id="CHEBI:16113"/>
        <dbReference type="ChEBI" id="CHEBI:17759"/>
        <dbReference type="ChEBI" id="CHEBI:57783"/>
        <dbReference type="ChEBI" id="CHEBI:58349"/>
        <dbReference type="EC" id="1.14.19.21"/>
    </reaction>
    <physiologicalReaction direction="left-to-right" evidence="9">
        <dbReference type="Rhea" id="RHEA:45025"/>
    </physiologicalReaction>
</comment>
<comment type="catalytic activity">
    <reaction evidence="4">
        <text>cholesterol + NADH + O2 + H(+) = 7-dehydrocholesterol + NAD(+) + 2 H2O</text>
        <dbReference type="Rhea" id="RHEA:51644"/>
        <dbReference type="ChEBI" id="CHEBI:15377"/>
        <dbReference type="ChEBI" id="CHEBI:15378"/>
        <dbReference type="ChEBI" id="CHEBI:15379"/>
        <dbReference type="ChEBI" id="CHEBI:16113"/>
        <dbReference type="ChEBI" id="CHEBI:17759"/>
        <dbReference type="ChEBI" id="CHEBI:57540"/>
        <dbReference type="ChEBI" id="CHEBI:57945"/>
        <dbReference type="EC" id="1.14.19.21"/>
    </reaction>
    <physiologicalReaction direction="left-to-right" evidence="9">
        <dbReference type="Rhea" id="RHEA:51645"/>
    </physiologicalReaction>
</comment>
<comment type="cofactor">
    <cofactor evidence="2">
        <name>[2Fe-2S] cluster</name>
        <dbReference type="ChEBI" id="CHEBI:190135"/>
    </cofactor>
    <text evidence="2">Binds 1 [2Fe-2S] cluster per subunit.</text>
</comment>
<comment type="pathway">
    <text evidence="8 9">Steroid hormone biosynthesis; dafachronic acid biosynthesis.</text>
</comment>
<comment type="subcellular location">
    <subcellularLocation>
        <location evidence="1">Membrane</location>
        <topology evidence="1">Single-pass membrane protein</topology>
    </subcellularLocation>
</comment>
<comment type="tissue specificity">
    <text evidence="3">Expressed predominantly in the prothoracic gland and weakly in brain and malpighian tubules.</text>
</comment>
<comment type="disruption phenotype">
    <text evidence="3">RNAi animals show apparent growth arrest in body size compared with control animal, also loss of nvd-Dm function prevents larval growth prior to the initiation of the molting process.</text>
</comment>
<comment type="miscellaneous">
    <text evidence="5">Nvd_Dm plays a pivotal role in larval development in Drosophila. On this basis of the prolonged first instar larval phenotype, the gene was named 'neverland', which is the fictional island featured in J. M. Barrie's play Peter Pan, where children cease to age.</text>
</comment>
<comment type="similarity">
    <text evidence="7">Belongs to the cholesterol 7-desaturase family.</text>
</comment>
<dbReference type="EC" id="1.14.19.21" evidence="4"/>
<dbReference type="EMBL" id="AB232987">
    <property type="protein sequence ID" value="BAE94193.1"/>
    <property type="molecule type" value="mRNA"/>
</dbReference>
<dbReference type="EMBL" id="AE014296">
    <property type="protein sequence ID" value="ABW08586.1"/>
    <property type="molecule type" value="Genomic_DNA"/>
</dbReference>
<dbReference type="EMBL" id="BT021261">
    <property type="protein sequence ID" value="AAX33409.1"/>
    <property type="molecule type" value="mRNA"/>
</dbReference>
<dbReference type="RefSeq" id="NP_001097670.1">
    <property type="nucleotide sequence ID" value="NM_001104200.3"/>
</dbReference>
<dbReference type="SMR" id="Q1JUZ1"/>
<dbReference type="FunCoup" id="Q1JUZ1">
    <property type="interactions" value="26"/>
</dbReference>
<dbReference type="STRING" id="7227.FBpp0112384"/>
<dbReference type="SwissLipids" id="SLP:000000089"/>
<dbReference type="PaxDb" id="7227-FBpp0112384"/>
<dbReference type="EnsemblMetazoa" id="FBtr0113473">
    <property type="protein sequence ID" value="FBpp0112384"/>
    <property type="gene ID" value="FBgn0287185"/>
</dbReference>
<dbReference type="GeneID" id="5740633"/>
<dbReference type="KEGG" id="dme:Dmel_CG40050"/>
<dbReference type="UCSC" id="CG40050-RA">
    <property type="organism name" value="d. melanogaster"/>
</dbReference>
<dbReference type="AGR" id="FB:FBgn0287185"/>
<dbReference type="CTD" id="5740633"/>
<dbReference type="FlyBase" id="FBgn0287185">
    <property type="gene designation" value="nvd"/>
</dbReference>
<dbReference type="VEuPathDB" id="VectorBase:FBgn0287185"/>
<dbReference type="eggNOG" id="ENOG502QS20">
    <property type="taxonomic scope" value="Eukaryota"/>
</dbReference>
<dbReference type="GeneTree" id="ENSGT00390000016856"/>
<dbReference type="HOGENOM" id="CLU_037178_0_0_1"/>
<dbReference type="InParanoid" id="Q1JUZ1"/>
<dbReference type="OMA" id="AVYQMRR"/>
<dbReference type="OrthoDB" id="426882at2759"/>
<dbReference type="PhylomeDB" id="Q1JUZ1"/>
<dbReference type="BioCyc" id="MetaCyc:MONOMER-18094"/>
<dbReference type="UniPathway" id="UPA01020"/>
<dbReference type="BioGRID-ORCS" id="5740633">
    <property type="hits" value="0 hits in 1 CRISPR screen"/>
</dbReference>
<dbReference type="GenomeRNAi" id="5740633"/>
<dbReference type="PRO" id="PR:Q1JUZ1"/>
<dbReference type="Proteomes" id="UP000000803">
    <property type="component" value="Chromosome 3L"/>
</dbReference>
<dbReference type="ExpressionAtlas" id="Q1JUZ1">
    <property type="expression patterns" value="baseline and differential"/>
</dbReference>
<dbReference type="GO" id="GO:0005737">
    <property type="term" value="C:cytoplasm"/>
    <property type="evidence" value="ECO:0000318"/>
    <property type="project" value="GO_Central"/>
</dbReference>
<dbReference type="GO" id="GO:0016020">
    <property type="term" value="C:membrane"/>
    <property type="evidence" value="ECO:0007669"/>
    <property type="project" value="UniProtKB-SubCell"/>
</dbReference>
<dbReference type="GO" id="GO:0051537">
    <property type="term" value="F:2 iron, 2 sulfur cluster binding"/>
    <property type="evidence" value="ECO:0007669"/>
    <property type="project" value="UniProtKB-KW"/>
</dbReference>
<dbReference type="GO" id="GO:0170056">
    <property type="term" value="F:cholesterol 7-desaturase (NAD(P)H) activity"/>
    <property type="evidence" value="ECO:0000314"/>
    <property type="project" value="FlyBase"/>
</dbReference>
<dbReference type="GO" id="GO:0046872">
    <property type="term" value="F:metal ion binding"/>
    <property type="evidence" value="ECO:0007669"/>
    <property type="project" value="UniProtKB-KW"/>
</dbReference>
<dbReference type="GO" id="GO:0016491">
    <property type="term" value="F:oxidoreductase activity"/>
    <property type="evidence" value="ECO:0000318"/>
    <property type="project" value="GO_Central"/>
</dbReference>
<dbReference type="GO" id="GO:0008203">
    <property type="term" value="P:cholesterol metabolic process"/>
    <property type="evidence" value="ECO:0007669"/>
    <property type="project" value="UniProtKB-KW"/>
</dbReference>
<dbReference type="GO" id="GO:0045456">
    <property type="term" value="P:ecdysteroid biosynthetic process"/>
    <property type="evidence" value="ECO:0000315"/>
    <property type="project" value="FlyBase"/>
</dbReference>
<dbReference type="GO" id="GO:0002168">
    <property type="term" value="P:instar larval development"/>
    <property type="evidence" value="ECO:0000315"/>
    <property type="project" value="FlyBase"/>
</dbReference>
<dbReference type="GO" id="GO:0007552">
    <property type="term" value="P:metamorphosis"/>
    <property type="evidence" value="ECO:0000315"/>
    <property type="project" value="FlyBase"/>
</dbReference>
<dbReference type="GO" id="GO:0035264">
    <property type="term" value="P:multicellular organism growth"/>
    <property type="evidence" value="ECO:0000315"/>
    <property type="project" value="FlyBase"/>
</dbReference>
<dbReference type="CDD" id="cd03469">
    <property type="entry name" value="Rieske_RO_Alpha_N"/>
    <property type="match status" value="1"/>
</dbReference>
<dbReference type="Gene3D" id="3.90.380.10">
    <property type="entry name" value="Naphthalene 1,2-dioxygenase Alpha Subunit, Chain A, domain 1"/>
    <property type="match status" value="1"/>
</dbReference>
<dbReference type="Gene3D" id="2.102.10.10">
    <property type="entry name" value="Rieske [2Fe-2S] iron-sulphur domain"/>
    <property type="match status" value="1"/>
</dbReference>
<dbReference type="InterPro" id="IPR050584">
    <property type="entry name" value="Cholesterol_7-desaturase"/>
</dbReference>
<dbReference type="InterPro" id="IPR045605">
    <property type="entry name" value="KshA-like_C"/>
</dbReference>
<dbReference type="InterPro" id="IPR017941">
    <property type="entry name" value="Rieske_2Fe-2S"/>
</dbReference>
<dbReference type="InterPro" id="IPR036922">
    <property type="entry name" value="Rieske_2Fe-2S_sf"/>
</dbReference>
<dbReference type="PANTHER" id="PTHR21266:SF32">
    <property type="entry name" value="CHOLESTEROL 7-DESATURASE NVD"/>
    <property type="match status" value="1"/>
</dbReference>
<dbReference type="PANTHER" id="PTHR21266">
    <property type="entry name" value="IRON-SULFUR DOMAIN CONTAINING PROTEIN"/>
    <property type="match status" value="1"/>
</dbReference>
<dbReference type="Pfam" id="PF19298">
    <property type="entry name" value="KshA_C"/>
    <property type="match status" value="1"/>
</dbReference>
<dbReference type="Pfam" id="PF00355">
    <property type="entry name" value="Rieske"/>
    <property type="match status" value="1"/>
</dbReference>
<dbReference type="SUPFAM" id="SSF55961">
    <property type="entry name" value="Bet v1-like"/>
    <property type="match status" value="1"/>
</dbReference>
<dbReference type="SUPFAM" id="SSF50022">
    <property type="entry name" value="ISP domain"/>
    <property type="match status" value="1"/>
</dbReference>
<dbReference type="PROSITE" id="PS51296">
    <property type="entry name" value="RIESKE"/>
    <property type="match status" value="1"/>
</dbReference>